<feature type="chain" id="PRO_0000075323" description="Peptidyl-prolyl cis-trans isomerase FKBP5">
    <location>
        <begin position="1"/>
        <end position="457"/>
    </location>
</feature>
<feature type="domain" description="PPIase FKBP-type 1" evidence="3">
    <location>
        <begin position="50"/>
        <end position="138"/>
    </location>
</feature>
<feature type="domain" description="PPIase FKBP-type 2" evidence="3">
    <location>
        <begin position="165"/>
        <end position="251"/>
    </location>
</feature>
<feature type="repeat" description="TPR 1">
    <location>
        <begin position="268"/>
        <end position="301"/>
    </location>
</feature>
<feature type="repeat" description="TPR 2">
    <location>
        <begin position="317"/>
        <end position="350"/>
    </location>
</feature>
<feature type="repeat" description="TPR 3">
    <location>
        <begin position="351"/>
        <end position="384"/>
    </location>
</feature>
<feature type="region of interest" description="Disordered" evidence="4">
    <location>
        <begin position="1"/>
        <end position="26"/>
    </location>
</feature>
<feature type="region of interest" description="Disordered" evidence="4">
    <location>
        <begin position="421"/>
        <end position="457"/>
    </location>
</feature>
<feature type="modified residue" description="N-acetylmethionine" evidence="1">
    <location>
        <position position="1"/>
    </location>
</feature>
<feature type="modified residue" description="Phosphoserine" evidence="1">
    <location>
        <position position="13"/>
    </location>
</feature>
<feature type="modified residue" description="N6-acetyllysine" evidence="1">
    <location>
        <position position="28"/>
    </location>
</feature>
<feature type="modified residue" description="N6-acetyllysine" evidence="1">
    <location>
        <position position="155"/>
    </location>
</feature>
<feature type="modified residue" description="Phosphoserine" evidence="1">
    <location>
        <position position="445"/>
    </location>
</feature>
<accession>Q95L05</accession>
<organism>
    <name type="scientific">Chlorocebus aethiops</name>
    <name type="common">Green monkey</name>
    <name type="synonym">Cercopithecus aethiops</name>
    <dbReference type="NCBI Taxonomy" id="9534"/>
    <lineage>
        <taxon>Eukaryota</taxon>
        <taxon>Metazoa</taxon>
        <taxon>Chordata</taxon>
        <taxon>Craniata</taxon>
        <taxon>Vertebrata</taxon>
        <taxon>Euteleostomi</taxon>
        <taxon>Mammalia</taxon>
        <taxon>Eutheria</taxon>
        <taxon>Euarchontoglires</taxon>
        <taxon>Primates</taxon>
        <taxon>Haplorrhini</taxon>
        <taxon>Catarrhini</taxon>
        <taxon>Cercopithecidae</taxon>
        <taxon>Cercopithecinae</taxon>
        <taxon>Chlorocebus</taxon>
    </lineage>
</organism>
<gene>
    <name type="primary">FKBP5</name>
    <name type="synonym">FKBP51</name>
</gene>
<sequence length="457" mass="51095">MTTDEGAKNSGESPTATVAEQGEDITSKKDRGVLKIVKRVGNGEETPMIGDKVYVHYKGKLSNGKKFNSSHDRNEPFVFSLGKSQVIKAWDIGVATMKKGEICHLLCKPEYAYGSAGSVPKIPSNATLFFEIELLDFKGEDLLEDGGIIRRTKRKGEGYSNPNEGATVEIHLEGRCGERMFDCRDVAFTVGEGEDHDIPIGIDKALEKMQREEQCILYLGPRYGFGEAGKPKFGIEPNAELIYEVTLKSFEKAKESWEMDTKEKLEQAAIVKEKGTVYFKGGKYMRAVIQYGKIVSWLEMEYGLSEKESKASESFLLAAFLNLAMCYLKLREYTKAVECCDKALGLDSANEKGLYRRGEAQLLMNEFESAKGDFEKVLEVNPQNKAARLQISMCQKKAKEHNERDRRIYANMFKKFAEQDAKEEANKAMGKKTSEGVTNEKGTDSSAVEEEKAEGHV</sequence>
<reference key="1">
    <citation type="submission" date="2001-07" db="EMBL/GenBank/DDBJ databases">
        <title>African green monkey immunophilin FKBP51.</title>
        <authorList>
            <person name="Denny W.B."/>
            <person name="Scammell J.G."/>
        </authorList>
    </citation>
    <scope>NUCLEOTIDE SEQUENCE [MRNA]</scope>
</reference>
<keyword id="KW-0007">Acetylation</keyword>
<keyword id="KW-0143">Chaperone</keyword>
<keyword id="KW-0963">Cytoplasm</keyword>
<keyword id="KW-0413">Isomerase</keyword>
<keyword id="KW-0539">Nucleus</keyword>
<keyword id="KW-0597">Phosphoprotein</keyword>
<keyword id="KW-0677">Repeat</keyword>
<keyword id="KW-0697">Rotamase</keyword>
<keyword id="KW-0802">TPR repeat</keyword>
<keyword id="KW-0832">Ubl conjugation</keyword>
<dbReference type="EC" id="5.2.1.8" evidence="1"/>
<dbReference type="EMBL" id="AY044168">
    <property type="protein sequence ID" value="AAK95405.1"/>
    <property type="molecule type" value="mRNA"/>
</dbReference>
<dbReference type="SMR" id="Q95L05"/>
<dbReference type="GO" id="GO:0005737">
    <property type="term" value="C:cytoplasm"/>
    <property type="evidence" value="ECO:0007669"/>
    <property type="project" value="UniProtKB-SubCell"/>
</dbReference>
<dbReference type="GO" id="GO:0005634">
    <property type="term" value="C:nucleus"/>
    <property type="evidence" value="ECO:0007669"/>
    <property type="project" value="UniProtKB-SubCell"/>
</dbReference>
<dbReference type="GO" id="GO:0003755">
    <property type="term" value="F:peptidyl-prolyl cis-trans isomerase activity"/>
    <property type="evidence" value="ECO:0000250"/>
    <property type="project" value="UniProtKB"/>
</dbReference>
<dbReference type="GO" id="GO:0061077">
    <property type="term" value="P:chaperone-mediated protein folding"/>
    <property type="evidence" value="ECO:0000250"/>
    <property type="project" value="UniProtKB"/>
</dbReference>
<dbReference type="FunFam" id="1.25.40.10:FF:000008">
    <property type="entry name" value="Peptidylprolyl isomerase"/>
    <property type="match status" value="1"/>
</dbReference>
<dbReference type="FunFam" id="3.10.50.40:FF:000011">
    <property type="entry name" value="Peptidylprolyl isomerase"/>
    <property type="match status" value="1"/>
</dbReference>
<dbReference type="FunFam" id="3.10.50.40:FF:000013">
    <property type="entry name" value="Peptidylprolyl isomerase"/>
    <property type="match status" value="1"/>
</dbReference>
<dbReference type="Gene3D" id="3.10.50.40">
    <property type="match status" value="2"/>
</dbReference>
<dbReference type="Gene3D" id="1.25.40.10">
    <property type="entry name" value="Tetratricopeptide repeat domain"/>
    <property type="match status" value="1"/>
</dbReference>
<dbReference type="InterPro" id="IPR050754">
    <property type="entry name" value="FKBP4/5/8-like"/>
</dbReference>
<dbReference type="InterPro" id="IPR046357">
    <property type="entry name" value="PPIase_dom_sf"/>
</dbReference>
<dbReference type="InterPro" id="IPR001179">
    <property type="entry name" value="PPIase_FKBP_dom"/>
</dbReference>
<dbReference type="InterPro" id="IPR011990">
    <property type="entry name" value="TPR-like_helical_dom_sf"/>
</dbReference>
<dbReference type="InterPro" id="IPR019734">
    <property type="entry name" value="TPR_rpt"/>
</dbReference>
<dbReference type="PANTHER" id="PTHR46512">
    <property type="entry name" value="PEPTIDYLPROLYL ISOMERASE"/>
    <property type="match status" value="1"/>
</dbReference>
<dbReference type="PANTHER" id="PTHR46512:SF9">
    <property type="entry name" value="PEPTIDYLPROLYL ISOMERASE"/>
    <property type="match status" value="1"/>
</dbReference>
<dbReference type="Pfam" id="PF00254">
    <property type="entry name" value="FKBP_C"/>
    <property type="match status" value="2"/>
</dbReference>
<dbReference type="Pfam" id="PF00515">
    <property type="entry name" value="TPR_1"/>
    <property type="match status" value="1"/>
</dbReference>
<dbReference type="Pfam" id="PF13181">
    <property type="entry name" value="TPR_8"/>
    <property type="match status" value="1"/>
</dbReference>
<dbReference type="SMART" id="SM00028">
    <property type="entry name" value="TPR"/>
    <property type="match status" value="2"/>
</dbReference>
<dbReference type="SUPFAM" id="SSF54534">
    <property type="entry name" value="FKBP-like"/>
    <property type="match status" value="2"/>
</dbReference>
<dbReference type="SUPFAM" id="SSF48452">
    <property type="entry name" value="TPR-like"/>
    <property type="match status" value="1"/>
</dbReference>
<dbReference type="PROSITE" id="PS50059">
    <property type="entry name" value="FKBP_PPIASE"/>
    <property type="match status" value="2"/>
</dbReference>
<dbReference type="PROSITE" id="PS50005">
    <property type="entry name" value="TPR"/>
    <property type="match status" value="3"/>
</dbReference>
<dbReference type="PROSITE" id="PS50293">
    <property type="entry name" value="TPR_REGION"/>
    <property type="match status" value="1"/>
</dbReference>
<proteinExistence type="evidence at transcript level"/>
<comment type="function">
    <text evidence="1">Immunophilin protein with PPIase and co-chaperone activities. Component of unligated steroid receptors heterocomplexes through interaction with heat-shock protein 90 (HSP90). Plays a role in the intracellular trafficking of heterooligomeric forms of steroid hormone receptors maintaining the complex into the cytoplasm when unliganded. Acts as a regulator of Akt/AKT1 activity by promoting the interaction between Akt/AKT1 and PHLPP1, thereby enhancing dephosphorylation and subsequent activation of Akt/AKT1. Interacts with IKBKE and IKBKB which facilitates IKK complex assembly leading to increased IKBKE and IKBKB kinase activity, NF-kappaB activation, and IFN production.</text>
</comment>
<comment type="catalytic activity">
    <reaction evidence="1">
        <text>[protein]-peptidylproline (omega=180) = [protein]-peptidylproline (omega=0)</text>
        <dbReference type="Rhea" id="RHEA:16237"/>
        <dbReference type="Rhea" id="RHEA-COMP:10747"/>
        <dbReference type="Rhea" id="RHEA-COMP:10748"/>
        <dbReference type="ChEBI" id="CHEBI:83833"/>
        <dbReference type="ChEBI" id="CHEBI:83834"/>
        <dbReference type="EC" id="5.2.1.8"/>
    </reaction>
</comment>
<comment type="activity regulation">
    <text evidence="2">Inhibited by both FK506 and rapamycin.</text>
</comment>
<comment type="subunit">
    <text evidence="1 2">Part of a heteromultimeric cytoplasmic complex with HSP90AA1, HSPA1A/HSPA1B and steroid receptors. Upon ligand binding dissociates from the complex and FKBP4 takes its place (By similarity). Interacts with functionally mature heterooligomeric progesterone receptor complexes along with HSP90 and TEBP (By similarity). Interacts with NR3C1 (By similarity). Interacts with Akt/AKT1 and PHLPP1; enhancing dephosphorylation and subsequent activation of Akt/AKT1 (By similarity). Interacts with IFI44L; this interaction modulates the kinase activity of IKBKB and IKBKE (By similarity). Interacts with IKBKB and IKBKE (By similarity).</text>
</comment>
<comment type="subcellular location">
    <subcellularLocation>
        <location evidence="2">Cytoplasm</location>
    </subcellularLocation>
    <subcellularLocation>
        <location evidence="2">Nucleus</location>
    </subcellularLocation>
</comment>
<comment type="PTM">
    <text evidence="1">Acetylation impairs ability to promote interaction between Akt/AKT1 and PHLPP1. Deacetylation by SIRT7 promotes interaction between Akt/AKT1 and PHLPP1, leading to suppress Akt/AKT1 activation.</text>
</comment>
<comment type="PTM">
    <text evidence="1">Ubiquitinated, leading to degradation in a proteasome-dependent manner. Deubiquitinated by USP49, leading to stabilization.</text>
</comment>
<name>FKBP5_CHLAE</name>
<protein>
    <recommendedName>
        <fullName>Peptidyl-prolyl cis-trans isomerase FKBP5</fullName>
        <shortName>PPIase FKBP5</shortName>
        <ecNumber evidence="1">5.2.1.8</ecNumber>
    </recommendedName>
    <alternativeName>
        <fullName>51 kDa FK506-binding protein</fullName>
        <shortName>51 kDa FKBP</shortName>
        <shortName>FKBP-51</shortName>
    </alternativeName>
    <alternativeName>
        <fullName>FK506-binding protein 5</fullName>
        <shortName>FKBP-5</shortName>
    </alternativeName>
    <alternativeName>
        <fullName>Rotamase</fullName>
    </alternativeName>
</protein>
<evidence type="ECO:0000250" key="1">
    <source>
        <dbReference type="UniProtKB" id="Q13451"/>
    </source>
</evidence>
<evidence type="ECO:0000250" key="2">
    <source>
        <dbReference type="UniProtKB" id="Q64378"/>
    </source>
</evidence>
<evidence type="ECO:0000255" key="3">
    <source>
        <dbReference type="PROSITE-ProRule" id="PRU00277"/>
    </source>
</evidence>
<evidence type="ECO:0000256" key="4">
    <source>
        <dbReference type="SAM" id="MobiDB-lite"/>
    </source>
</evidence>